<reference key="1">
    <citation type="journal article" date="2005" name="Nucleic Acids Res.">
        <title>Genome dynamics and diversity of Shigella species, the etiologic agents of bacillary dysentery.</title>
        <authorList>
            <person name="Yang F."/>
            <person name="Yang J."/>
            <person name="Zhang X."/>
            <person name="Chen L."/>
            <person name="Jiang Y."/>
            <person name="Yan Y."/>
            <person name="Tang X."/>
            <person name="Wang J."/>
            <person name="Xiong Z."/>
            <person name="Dong J."/>
            <person name="Xue Y."/>
            <person name="Zhu Y."/>
            <person name="Xu X."/>
            <person name="Sun L."/>
            <person name="Chen S."/>
            <person name="Nie H."/>
            <person name="Peng J."/>
            <person name="Xu J."/>
            <person name="Wang Y."/>
            <person name="Yuan Z."/>
            <person name="Wen Y."/>
            <person name="Yao Z."/>
            <person name="Shen Y."/>
            <person name="Qiang B."/>
            <person name="Hou Y."/>
            <person name="Yu J."/>
            <person name="Jin Q."/>
        </authorList>
    </citation>
    <scope>NUCLEOTIDE SEQUENCE [LARGE SCALE GENOMIC DNA]</scope>
    <source>
        <strain>Ss046</strain>
    </source>
</reference>
<dbReference type="EMBL" id="CP000038">
    <property type="protein sequence ID" value="AAZ90105.1"/>
    <property type="molecule type" value="Genomic_DNA"/>
</dbReference>
<dbReference type="RefSeq" id="WP_000906996.1">
    <property type="nucleotide sequence ID" value="NC_007384.1"/>
</dbReference>
<dbReference type="SMR" id="Q3YWK7"/>
<dbReference type="KEGG" id="ssn:SSON_3550"/>
<dbReference type="HOGENOM" id="CLU_006325_3_0_6"/>
<dbReference type="Proteomes" id="UP000002529">
    <property type="component" value="Chromosome"/>
</dbReference>
<dbReference type="GO" id="GO:0005524">
    <property type="term" value="F:ATP binding"/>
    <property type="evidence" value="ECO:0007669"/>
    <property type="project" value="UniProtKB-UniRule"/>
</dbReference>
<dbReference type="GO" id="GO:0003677">
    <property type="term" value="F:DNA binding"/>
    <property type="evidence" value="ECO:0007669"/>
    <property type="project" value="UniProtKB-KW"/>
</dbReference>
<dbReference type="GO" id="GO:0003700">
    <property type="term" value="F:DNA-binding transcription factor activity"/>
    <property type="evidence" value="ECO:0007669"/>
    <property type="project" value="UniProtKB-UniRule"/>
</dbReference>
<dbReference type="GO" id="GO:0045913">
    <property type="term" value="P:positive regulation of carbohydrate metabolic process"/>
    <property type="evidence" value="ECO:0007669"/>
    <property type="project" value="UniProtKB-UniRule"/>
</dbReference>
<dbReference type="GO" id="GO:0045893">
    <property type="term" value="P:positive regulation of DNA-templated transcription"/>
    <property type="evidence" value="ECO:0007669"/>
    <property type="project" value="UniProtKB-UniRule"/>
</dbReference>
<dbReference type="CDD" id="cd06170">
    <property type="entry name" value="LuxR_C_like"/>
    <property type="match status" value="1"/>
</dbReference>
<dbReference type="FunFam" id="1.10.10.10:FF:000115">
    <property type="entry name" value="HTH-type transcriptional regulator MalT"/>
    <property type="match status" value="1"/>
</dbReference>
<dbReference type="FunFam" id="1.25.40.10:FF:000086">
    <property type="entry name" value="HTH-type transcriptional regulator MalT"/>
    <property type="match status" value="1"/>
</dbReference>
<dbReference type="Gene3D" id="3.40.50.300">
    <property type="entry name" value="P-loop containing nucleotide triphosphate hydrolases"/>
    <property type="match status" value="1"/>
</dbReference>
<dbReference type="Gene3D" id="1.25.40.10">
    <property type="entry name" value="Tetratricopeptide repeat domain"/>
    <property type="match status" value="1"/>
</dbReference>
<dbReference type="Gene3D" id="1.10.10.10">
    <property type="entry name" value="Winged helix-like DNA-binding domain superfamily/Winged helix DNA-binding domain"/>
    <property type="match status" value="1"/>
</dbReference>
<dbReference type="HAMAP" id="MF_01247">
    <property type="entry name" value="HTH_type_MalT"/>
    <property type="match status" value="1"/>
</dbReference>
<dbReference type="InterPro" id="IPR027417">
    <property type="entry name" value="P-loop_NTPase"/>
</dbReference>
<dbReference type="InterPro" id="IPR016032">
    <property type="entry name" value="Sig_transdc_resp-reg_C-effctor"/>
</dbReference>
<dbReference type="InterPro" id="IPR011990">
    <property type="entry name" value="TPR-like_helical_dom_sf"/>
</dbReference>
<dbReference type="InterPro" id="IPR041617">
    <property type="entry name" value="TPR_MalT"/>
</dbReference>
<dbReference type="InterPro" id="IPR023768">
    <property type="entry name" value="Tscrpt_reg_HTH_MalT"/>
</dbReference>
<dbReference type="InterPro" id="IPR000792">
    <property type="entry name" value="Tscrpt_reg_LuxR_C"/>
</dbReference>
<dbReference type="InterPro" id="IPR036388">
    <property type="entry name" value="WH-like_DNA-bd_sf"/>
</dbReference>
<dbReference type="NCBIfam" id="NF003420">
    <property type="entry name" value="PRK04841.1"/>
    <property type="match status" value="1"/>
</dbReference>
<dbReference type="PANTHER" id="PTHR44688">
    <property type="entry name" value="DNA-BINDING TRANSCRIPTIONAL ACTIVATOR DEVR_DOSR"/>
    <property type="match status" value="1"/>
</dbReference>
<dbReference type="PANTHER" id="PTHR44688:SF16">
    <property type="entry name" value="DNA-BINDING TRANSCRIPTIONAL ACTIVATOR DEVR_DOSR"/>
    <property type="match status" value="1"/>
</dbReference>
<dbReference type="Pfam" id="PF00196">
    <property type="entry name" value="GerE"/>
    <property type="match status" value="1"/>
</dbReference>
<dbReference type="Pfam" id="PF17874">
    <property type="entry name" value="TPR_MalT"/>
    <property type="match status" value="1"/>
</dbReference>
<dbReference type="PRINTS" id="PR00038">
    <property type="entry name" value="HTHLUXR"/>
</dbReference>
<dbReference type="SMART" id="SM00421">
    <property type="entry name" value="HTH_LUXR"/>
    <property type="match status" value="1"/>
</dbReference>
<dbReference type="SUPFAM" id="SSF46894">
    <property type="entry name" value="C-terminal effector domain of the bipartite response regulators"/>
    <property type="match status" value="1"/>
</dbReference>
<dbReference type="SUPFAM" id="SSF52540">
    <property type="entry name" value="P-loop containing nucleoside triphosphate hydrolases"/>
    <property type="match status" value="1"/>
</dbReference>
<dbReference type="SUPFAM" id="SSF48452">
    <property type="entry name" value="TPR-like"/>
    <property type="match status" value="1"/>
</dbReference>
<dbReference type="PROSITE" id="PS00622">
    <property type="entry name" value="HTH_LUXR_1"/>
    <property type="match status" value="1"/>
</dbReference>
<dbReference type="PROSITE" id="PS50043">
    <property type="entry name" value="HTH_LUXR_2"/>
    <property type="match status" value="1"/>
</dbReference>
<feature type="chain" id="PRO_1000085781" description="HTH-type transcriptional regulator MalT">
    <location>
        <begin position="1"/>
        <end position="901"/>
    </location>
</feature>
<feature type="domain" description="HTH luxR-type" evidence="1">
    <location>
        <begin position="829"/>
        <end position="894"/>
    </location>
</feature>
<feature type="DNA-binding region" description="H-T-H motif" evidence="1">
    <location>
        <begin position="853"/>
        <end position="872"/>
    </location>
</feature>
<feature type="binding site" evidence="1">
    <location>
        <begin position="39"/>
        <end position="46"/>
    </location>
    <ligand>
        <name>ATP</name>
        <dbReference type="ChEBI" id="CHEBI:30616"/>
    </ligand>
</feature>
<sequence length="901" mass="103057">MLIPSKLSRPVRLDHTVVRERLLAKLSGANNFRLALITSPAGYGKTTLISQWAAGKNDIGWYSLDEGDNQQERFASYLIAAVQQATNGHCAICETMAQKRQYASLTSLFAQLFIELAEWHSPLYLVIDDYHLITNPVIHESMRFFIRHQPENLTLVVLSRNLPQLGIANLRVRDQLLEIGSQQLAFTHQEAKQFFDCRLSSPIEAAESSWICDDVSGWATALQLIALSARQNTHSAHKSARRLAGINASHLSDYLVDEVLDNVDLATRHFLLKSAILRSMNDALITRVTGEENGQMRLEEIERQGLFLQRMDDTGEWFCYHPLFGNFLRQRCQWELAAELPEIHRAAAESWMAQGFPSEAIHHALAAGDALMLRDILLNHAWSLFNHSELSLLEESLKALPWDSLLENPQLVLLQAWLMQSQHRYGEVNTLLARAEHEIKDIREGTMHAEFNALRAQVAINDGNPDEAERLAKLALEELPPGWFYSRIVATSVLGEVLHCKGELTRSLALMQQTEQMARQHDVWHYALWSLIQQSEILFAQGFLQTAWETQEKTFQLINEQHLEQLPMHEFLVRIRAQLLWAWARLDEAEASARSGIEVLSSYQPQQQLQCLAMLIQCSLARGDLDNARSQLNRLENLLGNGKYHSDWISNANKVRVIYWQMTGDKAAAANWLRHTAKPEFANNHFLQGQWRNIARAQILLGEFEPAEIVLEELNENARSLRLMSDLNRNLLLLNQLYWQAGRKSDAQRVLLDALKLANRTGFISHFVIEGEAMAQQLRQLIQLNTLPELEQHRAQRILREINQHHRHKFAHFDENFVERLLNHPEVPELIHTSPLTQREWQVLGLIYSGYSNEQIAGELEVAATTIKTHIRNLYQKLGVAHRQAAVQHAQKLLKMMGYGV</sequence>
<protein>
    <recommendedName>
        <fullName evidence="1">HTH-type transcriptional regulator MalT</fullName>
    </recommendedName>
    <alternativeName>
        <fullName evidence="1">ATP-dependent transcriptional activator MalT</fullName>
    </alternativeName>
</protein>
<accession>Q3YWK7</accession>
<keyword id="KW-0010">Activator</keyword>
<keyword id="KW-0067">ATP-binding</keyword>
<keyword id="KW-0119">Carbohydrate metabolism</keyword>
<keyword id="KW-0238">DNA-binding</keyword>
<keyword id="KW-0547">Nucleotide-binding</keyword>
<keyword id="KW-1185">Reference proteome</keyword>
<keyword id="KW-0804">Transcription</keyword>
<keyword id="KW-0805">Transcription regulation</keyword>
<comment type="function">
    <text evidence="1">Positively regulates the transcription of the maltose regulon whose gene products are responsible for uptake and catabolism of malto-oligosaccharides. Specifically binds to the promoter region of its target genes, recognizing a short DNA motif called the MalT box.</text>
</comment>
<comment type="activity regulation">
    <text evidence="1">Activated by ATP and maltotriose, which are both required for DNA binding.</text>
</comment>
<comment type="subunit">
    <text evidence="1">Monomer in solution. Oligomerizes to an active state in the presence of the positive effectors ATP and maltotriose.</text>
</comment>
<comment type="similarity">
    <text evidence="1">Belongs to the MalT family.</text>
</comment>
<name>MALT_SHISS</name>
<proteinExistence type="inferred from homology"/>
<evidence type="ECO:0000255" key="1">
    <source>
        <dbReference type="HAMAP-Rule" id="MF_01247"/>
    </source>
</evidence>
<gene>
    <name evidence="1" type="primary">malT</name>
    <name type="ordered locus">SSON_3550</name>
</gene>
<organism>
    <name type="scientific">Shigella sonnei (strain Ss046)</name>
    <dbReference type="NCBI Taxonomy" id="300269"/>
    <lineage>
        <taxon>Bacteria</taxon>
        <taxon>Pseudomonadati</taxon>
        <taxon>Pseudomonadota</taxon>
        <taxon>Gammaproteobacteria</taxon>
        <taxon>Enterobacterales</taxon>
        <taxon>Enterobacteriaceae</taxon>
        <taxon>Shigella</taxon>
    </lineage>
</organism>